<evidence type="ECO:0000255" key="1">
    <source>
        <dbReference type="HAMAP-Rule" id="MF_00213"/>
    </source>
</evidence>
<accession>Q8TV53</accession>
<comment type="function">
    <text evidence="1">Involved in the maturation of [NiFe] hydrogenases. Required for nickel insertion into the metal center of the hydrogenase.</text>
</comment>
<comment type="similarity">
    <text evidence="1">Belongs to the HypA/HybF family.</text>
</comment>
<name>HYPA_METKA</name>
<proteinExistence type="inferred from homology"/>
<feature type="chain" id="PRO_0000129078" description="Hydrogenase maturation factor HypA">
    <location>
        <begin position="1"/>
        <end position="142"/>
    </location>
</feature>
<feature type="binding site" evidence="1">
    <location>
        <position position="2"/>
    </location>
    <ligand>
        <name>Ni(2+)</name>
        <dbReference type="ChEBI" id="CHEBI:49786"/>
    </ligand>
</feature>
<feature type="binding site" evidence="1">
    <location>
        <position position="73"/>
    </location>
    <ligand>
        <name>Zn(2+)</name>
        <dbReference type="ChEBI" id="CHEBI:29105"/>
    </ligand>
</feature>
<feature type="binding site" evidence="1">
    <location>
        <position position="76"/>
    </location>
    <ligand>
        <name>Zn(2+)</name>
        <dbReference type="ChEBI" id="CHEBI:29105"/>
    </ligand>
</feature>
<feature type="binding site" evidence="1">
    <location>
        <position position="109"/>
    </location>
    <ligand>
        <name>Zn(2+)</name>
        <dbReference type="ChEBI" id="CHEBI:29105"/>
    </ligand>
</feature>
<feature type="binding site" evidence="1">
    <location>
        <position position="112"/>
    </location>
    <ligand>
        <name>Zn(2+)</name>
        <dbReference type="ChEBI" id="CHEBI:29105"/>
    </ligand>
</feature>
<gene>
    <name evidence="1" type="primary">hypA</name>
    <name type="synonym">hybF</name>
    <name type="ordered locus">MK1547</name>
</gene>
<reference key="1">
    <citation type="journal article" date="2002" name="Proc. Natl. Acad. Sci. U.S.A.">
        <title>The complete genome of hyperthermophile Methanopyrus kandleri AV19 and monophyly of archaeal methanogens.</title>
        <authorList>
            <person name="Slesarev A.I."/>
            <person name="Mezhevaya K.V."/>
            <person name="Makarova K.S."/>
            <person name="Polushin N.N."/>
            <person name="Shcherbinina O.V."/>
            <person name="Shakhova V.V."/>
            <person name="Belova G.I."/>
            <person name="Aravind L."/>
            <person name="Natale D.A."/>
            <person name="Rogozin I.B."/>
            <person name="Tatusov R.L."/>
            <person name="Wolf Y.I."/>
            <person name="Stetter K.O."/>
            <person name="Malykh A.G."/>
            <person name="Koonin E.V."/>
            <person name="Kozyavkin S.A."/>
        </authorList>
    </citation>
    <scope>NUCLEOTIDE SEQUENCE [LARGE SCALE GENOMIC DNA]</scope>
    <source>
        <strain>AV19 / DSM 6324 / JCM 9639 / NBRC 100938</strain>
    </source>
</reference>
<organism>
    <name type="scientific">Methanopyrus kandleri (strain AV19 / DSM 6324 / JCM 9639 / NBRC 100938)</name>
    <dbReference type="NCBI Taxonomy" id="190192"/>
    <lineage>
        <taxon>Archaea</taxon>
        <taxon>Methanobacteriati</taxon>
        <taxon>Methanobacteriota</taxon>
        <taxon>Methanomada group</taxon>
        <taxon>Methanopyri</taxon>
        <taxon>Methanopyrales</taxon>
        <taxon>Methanopyraceae</taxon>
        <taxon>Methanopyrus</taxon>
    </lineage>
</organism>
<keyword id="KW-0479">Metal-binding</keyword>
<keyword id="KW-0533">Nickel</keyword>
<keyword id="KW-1185">Reference proteome</keyword>
<keyword id="KW-0862">Zinc</keyword>
<protein>
    <recommendedName>
        <fullName evidence="1">Hydrogenase maturation factor HypA</fullName>
    </recommendedName>
</protein>
<dbReference type="EMBL" id="AE009439">
    <property type="protein sequence ID" value="AAM02760.1"/>
    <property type="molecule type" value="Genomic_DNA"/>
</dbReference>
<dbReference type="RefSeq" id="WP_011019915.1">
    <property type="nucleotide sequence ID" value="NC_003551.1"/>
</dbReference>
<dbReference type="SMR" id="Q8TV53"/>
<dbReference type="STRING" id="190192.MK1547"/>
<dbReference type="PaxDb" id="190192-MK1547"/>
<dbReference type="EnsemblBacteria" id="AAM02760">
    <property type="protein sequence ID" value="AAM02760"/>
    <property type="gene ID" value="MK1547"/>
</dbReference>
<dbReference type="GeneID" id="1478142"/>
<dbReference type="KEGG" id="mka:MK1547"/>
<dbReference type="HOGENOM" id="CLU_126929_2_0_2"/>
<dbReference type="InParanoid" id="Q8TV53"/>
<dbReference type="OrthoDB" id="36835at2157"/>
<dbReference type="Proteomes" id="UP000001826">
    <property type="component" value="Chromosome"/>
</dbReference>
<dbReference type="GO" id="GO:0016151">
    <property type="term" value="F:nickel cation binding"/>
    <property type="evidence" value="ECO:0007669"/>
    <property type="project" value="UniProtKB-UniRule"/>
</dbReference>
<dbReference type="GO" id="GO:0008270">
    <property type="term" value="F:zinc ion binding"/>
    <property type="evidence" value="ECO:0007669"/>
    <property type="project" value="UniProtKB-UniRule"/>
</dbReference>
<dbReference type="GO" id="GO:0051604">
    <property type="term" value="P:protein maturation"/>
    <property type="evidence" value="ECO:0007669"/>
    <property type="project" value="InterPro"/>
</dbReference>
<dbReference type="GO" id="GO:0036211">
    <property type="term" value="P:protein modification process"/>
    <property type="evidence" value="ECO:0007669"/>
    <property type="project" value="UniProtKB-UniRule"/>
</dbReference>
<dbReference type="Gene3D" id="3.30.2320.80">
    <property type="match status" value="1"/>
</dbReference>
<dbReference type="HAMAP" id="MF_00213">
    <property type="entry name" value="HypA_HybF"/>
    <property type="match status" value="1"/>
</dbReference>
<dbReference type="InterPro" id="IPR020538">
    <property type="entry name" value="Hydgase_Ni_incorp_HypA/HybF_CS"/>
</dbReference>
<dbReference type="InterPro" id="IPR000688">
    <property type="entry name" value="HypA/HybF"/>
</dbReference>
<dbReference type="NCBIfam" id="TIGR00100">
    <property type="entry name" value="hypA"/>
    <property type="match status" value="1"/>
</dbReference>
<dbReference type="PANTHER" id="PTHR34535">
    <property type="entry name" value="HYDROGENASE MATURATION FACTOR HYPA"/>
    <property type="match status" value="1"/>
</dbReference>
<dbReference type="PANTHER" id="PTHR34535:SF3">
    <property type="entry name" value="HYDROGENASE MATURATION FACTOR HYPA"/>
    <property type="match status" value="1"/>
</dbReference>
<dbReference type="Pfam" id="PF01155">
    <property type="entry name" value="HypA"/>
    <property type="match status" value="1"/>
</dbReference>
<dbReference type="PIRSF" id="PIRSF004761">
    <property type="entry name" value="Hydrgn_mat_HypA"/>
    <property type="match status" value="1"/>
</dbReference>
<dbReference type="PROSITE" id="PS01249">
    <property type="entry name" value="HYPA"/>
    <property type="match status" value="1"/>
</dbReference>
<sequence>MHELSVAQSVLETVLDVARKRGAERVLSVRLRIGEFTLLNPEQLRFCLEVLAEGTPVEGAKFEIEIERGYFKCAECGHRWRPEDESLKDPSLHTAFDLSELTELLDLKCPKCGSRAVKLDGGDACSIESVRLEVPGEQHAQG</sequence>